<feature type="chain" id="PRO_0000382713" description="Cytosolic Fe-S cluster assembly factor Nubp2 homolog">
    <location>
        <begin position="1"/>
        <end position="255"/>
    </location>
</feature>
<feature type="binding site" evidence="2">
    <location>
        <begin position="14"/>
        <end position="21"/>
    </location>
    <ligand>
        <name>ATP</name>
        <dbReference type="ChEBI" id="CHEBI:30616"/>
    </ligand>
</feature>
<feature type="binding site" evidence="2">
    <location>
        <position position="185"/>
    </location>
    <ligand>
        <name>[4Fe-4S] cluster</name>
        <dbReference type="ChEBI" id="CHEBI:49883"/>
        <note>ligand shared between dimeric partners</note>
    </ligand>
</feature>
<feature type="binding site" evidence="2">
    <location>
        <position position="188"/>
    </location>
    <ligand>
        <name>[4Fe-4S] cluster</name>
        <dbReference type="ChEBI" id="CHEBI:49883"/>
        <note>ligand shared between dimeric partners</note>
    </ligand>
</feature>
<evidence type="ECO:0000250" key="1">
    <source>
        <dbReference type="UniProtKB" id="Q9VPD2"/>
    </source>
</evidence>
<evidence type="ECO:0000255" key="2">
    <source>
        <dbReference type="HAMAP-Rule" id="MF_03039"/>
    </source>
</evidence>
<keyword id="KW-0004">4Fe-4S</keyword>
<keyword id="KW-0067">ATP-binding</keyword>
<keyword id="KW-0963">Cytoplasm</keyword>
<keyword id="KW-0408">Iron</keyword>
<keyword id="KW-0411">Iron-sulfur</keyword>
<keyword id="KW-0479">Metal-binding</keyword>
<keyword id="KW-0547">Nucleotide-binding</keyword>
<keyword id="KW-1185">Reference proteome</keyword>
<sequence>MLDKVKNVIIVLSGKGGVGKSTVSTQLALALRHSGHKVGLLDIDLCGPSVPFLLGLEGSNIYQCDEGWVPIYTDASKTLAVMSIGFLLKNRTDPVIWRGPKKTMMIRQFLTDVKWEELDYLIIDTPPGTSDEHITVMECMREVPCNGAIIVTTPQSVALDDVRKEITFCKKTGIKLLGIVEIFVCPNCTNCTNIFSSNGGVELAHLVQIPHLGTLPIDPRVGVLAGSTASVLDELPDSPTAQVLRGIVQHLVALT</sequence>
<name>NUBP2_DROPE</name>
<organism>
    <name type="scientific">Drosophila persimilis</name>
    <name type="common">Fruit fly</name>
    <dbReference type="NCBI Taxonomy" id="7234"/>
    <lineage>
        <taxon>Eukaryota</taxon>
        <taxon>Metazoa</taxon>
        <taxon>Ecdysozoa</taxon>
        <taxon>Arthropoda</taxon>
        <taxon>Hexapoda</taxon>
        <taxon>Insecta</taxon>
        <taxon>Pterygota</taxon>
        <taxon>Neoptera</taxon>
        <taxon>Endopterygota</taxon>
        <taxon>Diptera</taxon>
        <taxon>Brachycera</taxon>
        <taxon>Muscomorpha</taxon>
        <taxon>Ephydroidea</taxon>
        <taxon>Drosophilidae</taxon>
        <taxon>Drosophila</taxon>
        <taxon>Sophophora</taxon>
    </lineage>
</organism>
<protein>
    <recommendedName>
        <fullName evidence="2">Cytosolic Fe-S cluster assembly factor Nubp2 homolog</fullName>
    </recommendedName>
</protein>
<gene>
    <name evidence="1" type="primary">Nubp2</name>
    <name type="ORF">GL12799</name>
</gene>
<reference key="1">
    <citation type="journal article" date="2007" name="Nature">
        <title>Evolution of genes and genomes on the Drosophila phylogeny.</title>
        <authorList>
            <consortium name="Drosophila 12 genomes consortium"/>
        </authorList>
    </citation>
    <scope>NUCLEOTIDE SEQUENCE [LARGE SCALE GENOMIC DNA]</scope>
    <source>
        <strain>MSH-3 / Tucson 14011-0111.49</strain>
    </source>
</reference>
<comment type="function">
    <text evidence="2">Component of the cytosolic iron-sulfur (Fe/S) protein assembly (CIA) machinery. Required for maturation of extramitochondrial Fe-S proteins. The Nubp1-Nubp2 heterotetramer forms a Fe-S scaffold complex, mediating the de novo assembly of an Fe-S cluster and its transfer to target apoproteins.</text>
</comment>
<comment type="cofactor">
    <cofactor evidence="2">
        <name>[4Fe-4S] cluster</name>
        <dbReference type="ChEBI" id="CHEBI:49883"/>
    </cofactor>
    <text evidence="2">Binds 4 [4Fe-4S] clusters per heterotetramer. Contains two stable clusters in the N-termini of Nubp1 and two labile, bridging clusters between subunits of the Nubp1-Nubp2 heterotetramer.</text>
</comment>
<comment type="subunit">
    <text evidence="2">Heterotetramer of 2 Nubp1 and 2 Nubp2 chains.</text>
</comment>
<comment type="subcellular location">
    <subcellularLocation>
        <location evidence="2">Cytoplasm</location>
    </subcellularLocation>
</comment>
<comment type="similarity">
    <text evidence="2">Belongs to the Mrp/NBP35 ATP-binding proteins family. NUBP2/CFD1 subfamily.</text>
</comment>
<proteinExistence type="inferred from homology"/>
<dbReference type="EMBL" id="CH479219">
    <property type="protein sequence ID" value="EDW34684.1"/>
    <property type="molecule type" value="Genomic_DNA"/>
</dbReference>
<dbReference type="RefSeq" id="XP_002026873.1">
    <property type="nucleotide sequence ID" value="XM_002026837.1"/>
</dbReference>
<dbReference type="SMR" id="B4H7P4"/>
<dbReference type="STRING" id="7234.B4H7P4"/>
<dbReference type="EnsemblMetazoa" id="FBtr0178414">
    <property type="protein sequence ID" value="FBpp0176906"/>
    <property type="gene ID" value="FBgn0150405"/>
</dbReference>
<dbReference type="eggNOG" id="KOG3022">
    <property type="taxonomic scope" value="Eukaryota"/>
</dbReference>
<dbReference type="HOGENOM" id="CLU_024839_0_1_1"/>
<dbReference type="OMA" id="WIPVFAD"/>
<dbReference type="OrthoDB" id="1741334at2759"/>
<dbReference type="PhylomeDB" id="B4H7P4"/>
<dbReference type="Proteomes" id="UP000008744">
    <property type="component" value="Unassembled WGS sequence"/>
</dbReference>
<dbReference type="GO" id="GO:0005829">
    <property type="term" value="C:cytosol"/>
    <property type="evidence" value="ECO:0007669"/>
    <property type="project" value="TreeGrafter"/>
</dbReference>
<dbReference type="GO" id="GO:0051539">
    <property type="term" value="F:4 iron, 4 sulfur cluster binding"/>
    <property type="evidence" value="ECO:0007669"/>
    <property type="project" value="UniProtKB-UniRule"/>
</dbReference>
<dbReference type="GO" id="GO:0005524">
    <property type="term" value="F:ATP binding"/>
    <property type="evidence" value="ECO:0007669"/>
    <property type="project" value="UniProtKB-KW"/>
</dbReference>
<dbReference type="GO" id="GO:0140663">
    <property type="term" value="F:ATP-dependent FeS chaperone activity"/>
    <property type="evidence" value="ECO:0007669"/>
    <property type="project" value="InterPro"/>
</dbReference>
<dbReference type="GO" id="GO:0046872">
    <property type="term" value="F:metal ion binding"/>
    <property type="evidence" value="ECO:0007669"/>
    <property type="project" value="UniProtKB-KW"/>
</dbReference>
<dbReference type="GO" id="GO:0016226">
    <property type="term" value="P:iron-sulfur cluster assembly"/>
    <property type="evidence" value="ECO:0007669"/>
    <property type="project" value="UniProtKB-UniRule"/>
</dbReference>
<dbReference type="CDD" id="cd02037">
    <property type="entry name" value="Mrp_NBP35"/>
    <property type="match status" value="1"/>
</dbReference>
<dbReference type="FunFam" id="3.40.50.300:FF:000796">
    <property type="entry name" value="Cytosolic Fe-S cluster assembly factor NUBP2"/>
    <property type="match status" value="1"/>
</dbReference>
<dbReference type="Gene3D" id="3.40.50.300">
    <property type="entry name" value="P-loop containing nucleotide triphosphate hydrolases"/>
    <property type="match status" value="1"/>
</dbReference>
<dbReference type="HAMAP" id="MF_02040">
    <property type="entry name" value="Mrp_NBP35"/>
    <property type="match status" value="1"/>
</dbReference>
<dbReference type="HAMAP" id="MF_03039">
    <property type="entry name" value="NUBP2"/>
    <property type="match status" value="1"/>
</dbReference>
<dbReference type="InterPro" id="IPR000808">
    <property type="entry name" value="Mrp-like_CS"/>
</dbReference>
<dbReference type="InterPro" id="IPR019591">
    <property type="entry name" value="Mrp/NBP35_ATP-bd"/>
</dbReference>
<dbReference type="InterPro" id="IPR028600">
    <property type="entry name" value="NUBP2/Cfd1_eukaryotes"/>
</dbReference>
<dbReference type="InterPro" id="IPR027417">
    <property type="entry name" value="P-loop_NTPase"/>
</dbReference>
<dbReference type="InterPro" id="IPR033756">
    <property type="entry name" value="YlxH/NBP35"/>
</dbReference>
<dbReference type="PANTHER" id="PTHR23264:SF19">
    <property type="entry name" value="CYTOSOLIC FE-S CLUSTER ASSEMBLY FACTOR NUBP2"/>
    <property type="match status" value="1"/>
</dbReference>
<dbReference type="PANTHER" id="PTHR23264">
    <property type="entry name" value="NUCLEOTIDE-BINDING PROTEIN NBP35 YEAST -RELATED"/>
    <property type="match status" value="1"/>
</dbReference>
<dbReference type="Pfam" id="PF10609">
    <property type="entry name" value="ParA"/>
    <property type="match status" value="1"/>
</dbReference>
<dbReference type="SUPFAM" id="SSF52540">
    <property type="entry name" value="P-loop containing nucleoside triphosphate hydrolases"/>
    <property type="match status" value="1"/>
</dbReference>
<dbReference type="PROSITE" id="PS01215">
    <property type="entry name" value="MRP"/>
    <property type="match status" value="1"/>
</dbReference>
<accession>B4H7P4</accession>